<name>RS9_SHEDO</name>
<keyword id="KW-1185">Reference proteome</keyword>
<keyword id="KW-0687">Ribonucleoprotein</keyword>
<keyword id="KW-0689">Ribosomal protein</keyword>
<organism>
    <name type="scientific">Shewanella denitrificans (strain OS217 / ATCC BAA-1090 / DSM 15013)</name>
    <dbReference type="NCBI Taxonomy" id="318161"/>
    <lineage>
        <taxon>Bacteria</taxon>
        <taxon>Pseudomonadati</taxon>
        <taxon>Pseudomonadota</taxon>
        <taxon>Gammaproteobacteria</taxon>
        <taxon>Alteromonadales</taxon>
        <taxon>Shewanellaceae</taxon>
        <taxon>Shewanella</taxon>
    </lineage>
</organism>
<feature type="chain" id="PRO_1000051320" description="Small ribosomal subunit protein uS9">
    <location>
        <begin position="1"/>
        <end position="130"/>
    </location>
</feature>
<comment type="similarity">
    <text evidence="1">Belongs to the universal ribosomal protein uS9 family.</text>
</comment>
<evidence type="ECO:0000255" key="1">
    <source>
        <dbReference type="HAMAP-Rule" id="MF_00532"/>
    </source>
</evidence>
<evidence type="ECO:0000305" key="2"/>
<protein>
    <recommendedName>
        <fullName evidence="1">Small ribosomal subunit protein uS9</fullName>
    </recommendedName>
    <alternativeName>
        <fullName evidence="2">30S ribosomal protein S9</fullName>
    </alternativeName>
</protein>
<dbReference type="EMBL" id="CP000302">
    <property type="protein sequence ID" value="ABE53799.1"/>
    <property type="molecule type" value="Genomic_DNA"/>
</dbReference>
<dbReference type="RefSeq" id="WP_011494965.1">
    <property type="nucleotide sequence ID" value="NC_007954.1"/>
</dbReference>
<dbReference type="SMR" id="Q12RX7"/>
<dbReference type="STRING" id="318161.Sden_0507"/>
<dbReference type="KEGG" id="sdn:Sden_0507"/>
<dbReference type="eggNOG" id="COG0103">
    <property type="taxonomic scope" value="Bacteria"/>
</dbReference>
<dbReference type="HOGENOM" id="CLU_046483_2_1_6"/>
<dbReference type="OrthoDB" id="9803965at2"/>
<dbReference type="Proteomes" id="UP000001982">
    <property type="component" value="Chromosome"/>
</dbReference>
<dbReference type="GO" id="GO:0022627">
    <property type="term" value="C:cytosolic small ribosomal subunit"/>
    <property type="evidence" value="ECO:0007669"/>
    <property type="project" value="TreeGrafter"/>
</dbReference>
<dbReference type="GO" id="GO:0003723">
    <property type="term" value="F:RNA binding"/>
    <property type="evidence" value="ECO:0007669"/>
    <property type="project" value="TreeGrafter"/>
</dbReference>
<dbReference type="GO" id="GO:0003735">
    <property type="term" value="F:structural constituent of ribosome"/>
    <property type="evidence" value="ECO:0007669"/>
    <property type="project" value="InterPro"/>
</dbReference>
<dbReference type="GO" id="GO:0006412">
    <property type="term" value="P:translation"/>
    <property type="evidence" value="ECO:0007669"/>
    <property type="project" value="UniProtKB-UniRule"/>
</dbReference>
<dbReference type="FunFam" id="3.30.230.10:FF:000001">
    <property type="entry name" value="30S ribosomal protein S9"/>
    <property type="match status" value="1"/>
</dbReference>
<dbReference type="Gene3D" id="3.30.230.10">
    <property type="match status" value="1"/>
</dbReference>
<dbReference type="HAMAP" id="MF_00532_B">
    <property type="entry name" value="Ribosomal_uS9_B"/>
    <property type="match status" value="1"/>
</dbReference>
<dbReference type="InterPro" id="IPR020568">
    <property type="entry name" value="Ribosomal_Su5_D2-typ_SF"/>
</dbReference>
<dbReference type="InterPro" id="IPR000754">
    <property type="entry name" value="Ribosomal_uS9"/>
</dbReference>
<dbReference type="InterPro" id="IPR023035">
    <property type="entry name" value="Ribosomal_uS9_bac/plastid"/>
</dbReference>
<dbReference type="InterPro" id="IPR020574">
    <property type="entry name" value="Ribosomal_uS9_CS"/>
</dbReference>
<dbReference type="InterPro" id="IPR014721">
    <property type="entry name" value="Ribsml_uS5_D2-typ_fold_subgr"/>
</dbReference>
<dbReference type="NCBIfam" id="NF001099">
    <property type="entry name" value="PRK00132.1"/>
    <property type="match status" value="1"/>
</dbReference>
<dbReference type="PANTHER" id="PTHR21569">
    <property type="entry name" value="RIBOSOMAL PROTEIN S9"/>
    <property type="match status" value="1"/>
</dbReference>
<dbReference type="PANTHER" id="PTHR21569:SF1">
    <property type="entry name" value="SMALL RIBOSOMAL SUBUNIT PROTEIN US9M"/>
    <property type="match status" value="1"/>
</dbReference>
<dbReference type="Pfam" id="PF00380">
    <property type="entry name" value="Ribosomal_S9"/>
    <property type="match status" value="1"/>
</dbReference>
<dbReference type="SUPFAM" id="SSF54211">
    <property type="entry name" value="Ribosomal protein S5 domain 2-like"/>
    <property type="match status" value="1"/>
</dbReference>
<dbReference type="PROSITE" id="PS00360">
    <property type="entry name" value="RIBOSOMAL_S9"/>
    <property type="match status" value="1"/>
</dbReference>
<accession>Q12RX7</accession>
<gene>
    <name evidence="1" type="primary">rpsI</name>
    <name type="ordered locus">Sden_0507</name>
</gene>
<sequence>MSATQYYGTGRRKTSTARVFAKAGSGNIVVNQRPLDVYFGRETARMVVRQPLELVEMTDKLDIYVTVKGGGTTGQAGAIRHGITRALLQLDEALRPTLRSAGFVTRDARKVERKKVGLRKARRKPQFSKR</sequence>
<proteinExistence type="inferred from homology"/>
<reference key="1">
    <citation type="submission" date="2006-03" db="EMBL/GenBank/DDBJ databases">
        <title>Complete sequence of Shewanella denitrificans OS217.</title>
        <authorList>
            <consortium name="US DOE Joint Genome Institute"/>
            <person name="Copeland A."/>
            <person name="Lucas S."/>
            <person name="Lapidus A."/>
            <person name="Barry K."/>
            <person name="Detter J.C."/>
            <person name="Glavina del Rio T."/>
            <person name="Hammon N."/>
            <person name="Israni S."/>
            <person name="Dalin E."/>
            <person name="Tice H."/>
            <person name="Pitluck S."/>
            <person name="Brettin T."/>
            <person name="Bruce D."/>
            <person name="Han C."/>
            <person name="Tapia R."/>
            <person name="Gilna P."/>
            <person name="Kiss H."/>
            <person name="Schmutz J."/>
            <person name="Larimer F."/>
            <person name="Land M."/>
            <person name="Hauser L."/>
            <person name="Kyrpides N."/>
            <person name="Lykidis A."/>
            <person name="Richardson P."/>
        </authorList>
    </citation>
    <scope>NUCLEOTIDE SEQUENCE [LARGE SCALE GENOMIC DNA]</scope>
    <source>
        <strain>OS217 / ATCC BAA-1090 / DSM 15013</strain>
    </source>
</reference>